<gene>
    <name evidence="1" type="primary">Zftraf1</name>
    <name evidence="6" type="synonym">Chrp</name>
    <name type="synonym">Cyhr1</name>
    <name type="synonym">Kiaa0496</name>
</gene>
<organism>
    <name type="scientific">Mus musculus</name>
    <name type="common">Mouse</name>
    <dbReference type="NCBI Taxonomy" id="10090"/>
    <lineage>
        <taxon>Eukaryota</taxon>
        <taxon>Metazoa</taxon>
        <taxon>Chordata</taxon>
        <taxon>Craniata</taxon>
        <taxon>Vertebrata</taxon>
        <taxon>Euteleostomi</taxon>
        <taxon>Mammalia</taxon>
        <taxon>Eutheria</taxon>
        <taxon>Euarchontoglires</taxon>
        <taxon>Glires</taxon>
        <taxon>Rodentia</taxon>
        <taxon>Myomorpha</taxon>
        <taxon>Muroidea</taxon>
        <taxon>Muridae</taxon>
        <taxon>Murinae</taxon>
        <taxon>Mus</taxon>
        <taxon>Mus</taxon>
    </lineage>
</organism>
<proteinExistence type="evidence at protein level"/>
<protein>
    <recommendedName>
        <fullName evidence="1">Zinc finger TRAF-type-containing protein 1</fullName>
    </recommendedName>
    <alternativeName>
        <fullName>Cysteine and histidine-rich protein 1</fullName>
    </alternativeName>
</protein>
<dbReference type="EMBL" id="AJ251516">
    <property type="protein sequence ID" value="CAB62575.1"/>
    <property type="molecule type" value="mRNA"/>
</dbReference>
<dbReference type="EMBL" id="AK129156">
    <property type="protein sequence ID" value="BAC97966.1"/>
    <property type="status" value="ALT_SEQ"/>
    <property type="molecule type" value="mRNA"/>
</dbReference>
<dbReference type="EMBL" id="BC062184">
    <property type="protein sequence ID" value="AAH62184.1"/>
    <property type="status" value="ALT_FRAME"/>
    <property type="molecule type" value="mRNA"/>
</dbReference>
<dbReference type="EMBL" id="BC082772">
    <property type="protein sequence ID" value="AAH82772.1"/>
    <property type="status" value="ALT_FRAME"/>
    <property type="molecule type" value="mRNA"/>
</dbReference>
<dbReference type="CCDS" id="CCDS70643.1">
    <molecule id="P0DW87-4"/>
</dbReference>
<dbReference type="RefSeq" id="NP_001263250.1">
    <molecule id="P0DW87-4"/>
    <property type="nucleotide sequence ID" value="NM_001276321.2"/>
</dbReference>
<dbReference type="RefSeq" id="NP_001344811.1">
    <molecule id="P0DW87-1"/>
    <property type="nucleotide sequence ID" value="NM_001357882.2"/>
</dbReference>
<dbReference type="RefSeq" id="NP_001395033.1">
    <molecule id="P0DW87-3"/>
    <property type="nucleotide sequence ID" value="NM_001408104.1"/>
</dbReference>
<dbReference type="RefSeq" id="NP_001395136.1">
    <molecule id="P0DW87-3"/>
    <property type="nucleotide sequence ID" value="NM_001408207.1"/>
</dbReference>
<dbReference type="RefSeq" id="NP_062269.1">
    <molecule id="P0DW87-2"/>
    <property type="nucleotide sequence ID" value="NM_019396.3"/>
</dbReference>
<dbReference type="RefSeq" id="XP_006521229.1">
    <property type="nucleotide sequence ID" value="XM_006521166.2"/>
</dbReference>
<dbReference type="RefSeq" id="XP_006521232.1">
    <property type="nucleotide sequence ID" value="XM_006521169.3"/>
</dbReference>
<dbReference type="RefSeq" id="XP_011243996.1">
    <property type="nucleotide sequence ID" value="XM_011245694.1"/>
</dbReference>
<dbReference type="FunCoup" id="P0DW87">
    <property type="interactions" value="549"/>
</dbReference>
<dbReference type="PhosphoSitePlus" id="P0DW87"/>
<dbReference type="ProteomicsDB" id="361726"/>
<dbReference type="Antibodypedia" id="52728">
    <property type="antibodies" value="22 antibodies from 10 providers"/>
</dbReference>
<dbReference type="DNASU" id="54151"/>
<dbReference type="Ensembl" id="ENSMUST00000081291.13">
    <molecule id="P0DW87-2"/>
    <property type="protein sequence ID" value="ENSMUSP00000080043.7"/>
    <property type="gene ID" value="ENSMUSG00000121583.1"/>
</dbReference>
<dbReference type="Ensembl" id="ENSMUST00000176274.2">
    <molecule id="P0DW87-4"/>
    <property type="protein sequence ID" value="ENSMUSP00000134739.2"/>
    <property type="gene ID" value="ENSMUSG00000053929.19"/>
</dbReference>
<dbReference type="GeneID" id="54151"/>
<dbReference type="KEGG" id="mmu:125488414"/>
<dbReference type="KEGG" id="mmu:54151"/>
<dbReference type="CTD" id="50626"/>
<dbReference type="MGI" id="MGI:1859320">
    <property type="gene designation" value="Zftraf1"/>
</dbReference>
<dbReference type="VEuPathDB" id="HostDB:ENSMUSG00000053929"/>
<dbReference type="GeneTree" id="ENSGT00390000018258"/>
<dbReference type="HOGENOM" id="CLU_035849_0_0_1"/>
<dbReference type="OMA" id="HERPEHE"/>
<dbReference type="OrthoDB" id="16994at9989"/>
<dbReference type="PhylomeDB" id="Q9QXA1"/>
<dbReference type="TreeFam" id="TF324281"/>
<dbReference type="BioGRID-ORCS" id="54151">
    <property type="hits" value="2 hits in 74 CRISPR screens"/>
</dbReference>
<dbReference type="ChiTaRS" id="Cyhr1">
    <property type="organism name" value="mouse"/>
</dbReference>
<dbReference type="PRO" id="PR:P0DW87"/>
<dbReference type="Proteomes" id="UP000000589">
    <property type="component" value="Chromosome 15"/>
</dbReference>
<dbReference type="Bgee" id="ENSMUSG00000053929">
    <property type="expression patterns" value="Expressed in ileal epithelium and 269 other cell types or tissues"/>
</dbReference>
<dbReference type="GO" id="GO:0005737">
    <property type="term" value="C:cytoplasm"/>
    <property type="evidence" value="ECO:0000314"/>
    <property type="project" value="MGI"/>
</dbReference>
<dbReference type="GO" id="GO:0005635">
    <property type="term" value="C:nuclear envelope"/>
    <property type="evidence" value="ECO:0000314"/>
    <property type="project" value="MGI"/>
</dbReference>
<dbReference type="GO" id="GO:0048471">
    <property type="term" value="C:perinuclear region of cytoplasm"/>
    <property type="evidence" value="ECO:0007669"/>
    <property type="project" value="UniProtKB-SubCell"/>
</dbReference>
<dbReference type="GO" id="GO:0008270">
    <property type="term" value="F:zinc ion binding"/>
    <property type="evidence" value="ECO:0007669"/>
    <property type="project" value="UniProtKB-KW"/>
</dbReference>
<dbReference type="CDD" id="cd22861">
    <property type="entry name" value="CYHR1_C"/>
    <property type="match status" value="1"/>
</dbReference>
<dbReference type="CDD" id="cd16505">
    <property type="entry name" value="RING-HC_CYHR1"/>
    <property type="match status" value="1"/>
</dbReference>
<dbReference type="FunFam" id="3.30.40.10:FF:000498">
    <property type="entry name" value="Cysteine and histidine rich 1"/>
    <property type="match status" value="1"/>
</dbReference>
<dbReference type="Gene3D" id="3.30.40.10">
    <property type="entry name" value="Zinc/RING finger domain, C3HC4 (zinc finger)"/>
    <property type="match status" value="2"/>
</dbReference>
<dbReference type="InterPro" id="IPR049548">
    <property type="entry name" value="Sina-like_RING"/>
</dbReference>
<dbReference type="InterPro" id="IPR039338">
    <property type="entry name" value="ZFTRAF1"/>
</dbReference>
<dbReference type="InterPro" id="IPR001841">
    <property type="entry name" value="Znf_RING"/>
</dbReference>
<dbReference type="InterPro" id="IPR013083">
    <property type="entry name" value="Znf_RING/FYVE/PHD"/>
</dbReference>
<dbReference type="InterPro" id="IPR001293">
    <property type="entry name" value="Znf_TRAF"/>
</dbReference>
<dbReference type="PANTHER" id="PTHR23059">
    <property type="entry name" value="CYSTEINE AND HISTIDINE-RICH PROTEIN 1"/>
    <property type="match status" value="1"/>
</dbReference>
<dbReference type="PANTHER" id="PTHR23059:SF4">
    <property type="entry name" value="ZINC FINGER TRAF-TYPE-CONTAINING PROTEIN 1"/>
    <property type="match status" value="1"/>
</dbReference>
<dbReference type="Pfam" id="PF21362">
    <property type="entry name" value="Sina_RING"/>
    <property type="match status" value="1"/>
</dbReference>
<dbReference type="SUPFAM" id="SSF57850">
    <property type="entry name" value="RING/U-box"/>
    <property type="match status" value="1"/>
</dbReference>
<dbReference type="SUPFAM" id="SSF49599">
    <property type="entry name" value="TRAF domain-like"/>
    <property type="match status" value="1"/>
</dbReference>
<dbReference type="PROSITE" id="PS50089">
    <property type="entry name" value="ZF_RING_2"/>
    <property type="match status" value="1"/>
</dbReference>
<dbReference type="PROSITE" id="PS50145">
    <property type="entry name" value="ZF_TRAF"/>
    <property type="match status" value="1"/>
</dbReference>
<keyword id="KW-0025">Alternative splicing</keyword>
<keyword id="KW-0963">Cytoplasm</keyword>
<keyword id="KW-0479">Metal-binding</keyword>
<keyword id="KW-1185">Reference proteome</keyword>
<keyword id="KW-0862">Zinc</keyword>
<keyword id="KW-0863">Zinc-finger</keyword>
<feature type="chain" id="PRO_0000328853" description="Zinc finger TRAF-type-containing protein 1">
    <location>
        <begin position="1"/>
        <end position="399"/>
    </location>
</feature>
<feature type="zinc finger region" description="RING-type; degenerate">
    <location>
        <begin position="106"/>
        <end position="151"/>
    </location>
</feature>
<feature type="zinc finger region" description="TRAF-type" evidence="2">
    <location>
        <begin position="152"/>
        <end position="210"/>
    </location>
</feature>
<feature type="region of interest" description="Disordered" evidence="3">
    <location>
        <begin position="1"/>
        <end position="21"/>
    </location>
</feature>
<feature type="compositionally biased region" description="Gly residues" evidence="3">
    <location>
        <begin position="1"/>
        <end position="13"/>
    </location>
</feature>
<feature type="splice variant" id="VSP_061641" description="In isoform 6.">
    <location>
        <begin position="1"/>
        <end position="125"/>
    </location>
</feature>
<feature type="splice variant" id="VSP_061642" description="In isoform 1.">
    <original>MSGAEEAGGGGPAAGPAGAVPAGVGVGAGPGAAAGPAAAALGEAAGPGIPDEAALAGARQLQEAAGDPDAPPKKRLRAAEAAEAAAAAVAAGSGKLEERLYSVLCCTVCLDLPKASVY</original>
    <variation>MVSKPRTEWSTVLSHLVLAGVSLHAAVSSV</variation>
    <location>
        <begin position="1"/>
        <end position="118"/>
    </location>
</feature>
<feature type="splice variant" id="VSP_061643" description="In isoform 6 and isoform 7.">
    <original>EVQFRPYRTDDFITRLYYETPRFTVLNQTWVLKARVNDSERNPNLSCKRTLSFQLLLKSKVTAPLECSFLLLKGPYDDVRISPVIYHFVFTNESNETDYVPLPIIDSVECNKLLAAKNINLRLFLFQIQK</original>
    <variation>VWVFGPYLWSTEQEEHSIKSDPVYRCSLKATEPPEAGKKLFGDRVPEQAEGLSSNCRTGNGCPQMSKLDQARPTGSHGSRASVTSSEHVGSKSQATPWAREHEAPADTGATQGNSIPSTAQPAAGGQLRAPRAGLDSQSCHAA</variation>
    <location>
        <begin position="270"/>
        <end position="399"/>
    </location>
</feature>
<evidence type="ECO:0000250" key="1">
    <source>
        <dbReference type="UniProtKB" id="P0DTL6"/>
    </source>
</evidence>
<evidence type="ECO:0000255" key="2">
    <source>
        <dbReference type="PROSITE-ProRule" id="PRU00207"/>
    </source>
</evidence>
<evidence type="ECO:0000256" key="3">
    <source>
        <dbReference type="SAM" id="MobiDB-lite"/>
    </source>
</evidence>
<evidence type="ECO:0000269" key="4">
    <source>
    </source>
</evidence>
<evidence type="ECO:0000269" key="5">
    <source>
    </source>
</evidence>
<evidence type="ECO:0000303" key="6">
    <source>
    </source>
</evidence>
<evidence type="ECO:0000305" key="7"/>
<reference key="1">
    <citation type="journal article" date="2000" name="FEBS Lett.">
        <title>Interaction of a novel cysteine and histidine-rich cytoplasmic protein with galectin-3 in a carbohydrate-independent manner galectin 3.</title>
        <authorList>
            <person name="Menon R.P."/>
            <person name="Strom M."/>
            <person name="Hughes R.C."/>
        </authorList>
    </citation>
    <scope>NUCLEOTIDE SEQUENCE [MRNA] (ISOFORM 1)</scope>
    <scope>SUBCELLULAR LOCATION</scope>
    <scope>TISSUE SPECIFICITY</scope>
    <scope>INTERACTION WITH LGALS3</scope>
</reference>
<reference key="2">
    <citation type="journal article" date="2003" name="DNA Res.">
        <title>Prediction of the coding sequences of mouse homologues of KIAA gene: III. The complete nucleotide sequences of 500 mouse KIAA-homologous cDNAs identified by screening of terminal sequences of cDNA clones randomly sampled from size-fractionated libraries.</title>
        <authorList>
            <person name="Okazaki N."/>
            <person name="Kikuno R."/>
            <person name="Ohara R."/>
            <person name="Inamoto S."/>
            <person name="Koseki H."/>
            <person name="Hiraoka S."/>
            <person name="Saga Y."/>
            <person name="Nagase T."/>
            <person name="Ohara O."/>
            <person name="Koga H."/>
        </authorList>
    </citation>
    <scope>NUCLEOTIDE SEQUENCE [LARGE SCALE MRNA] (ISOFORM 6)</scope>
    <source>
        <tissue>Embryonic tail</tissue>
    </source>
</reference>
<reference key="3">
    <citation type="journal article" date="2009" name="PLoS Biol.">
        <title>Lineage-specific biology revealed by a finished genome assembly of the mouse.</title>
        <authorList>
            <person name="Church D.M."/>
            <person name="Goodstadt L."/>
            <person name="Hillier L.W."/>
            <person name="Zody M.C."/>
            <person name="Goldstein S."/>
            <person name="She X."/>
            <person name="Bult C.J."/>
            <person name="Agarwala R."/>
            <person name="Cherry J.L."/>
            <person name="DiCuccio M."/>
            <person name="Hlavina W."/>
            <person name="Kapustin Y."/>
            <person name="Meric P."/>
            <person name="Maglott D."/>
            <person name="Birtle Z."/>
            <person name="Marques A.C."/>
            <person name="Graves T."/>
            <person name="Zhou S."/>
            <person name="Teague B."/>
            <person name="Potamousis K."/>
            <person name="Churas C."/>
            <person name="Place M."/>
            <person name="Herschleb J."/>
            <person name="Runnheim R."/>
            <person name="Forrest D."/>
            <person name="Amos-Landgraf J."/>
            <person name="Schwartz D.C."/>
            <person name="Cheng Z."/>
            <person name="Lindblad-Toh K."/>
            <person name="Eichler E.E."/>
            <person name="Ponting C.P."/>
        </authorList>
    </citation>
    <scope>NUCLEOTIDE SEQUENCE [LARGE SCALE GENOMIC DNA]</scope>
    <source>
        <strain>C57BL/6J</strain>
    </source>
</reference>
<reference key="4">
    <citation type="journal article" date="2004" name="Genome Res.">
        <title>The status, quality, and expansion of the NIH full-length cDNA project: the Mammalian Gene Collection (MGC).</title>
        <authorList>
            <consortium name="The MGC Project Team"/>
        </authorList>
    </citation>
    <scope>NUCLEOTIDE SEQUENCE [LARGE SCALE MRNA] (ISOFORM 7)</scope>
    <source>
        <strain>FVB/N</strain>
        <tissue>Limb</tissue>
        <tissue>Mammary tumor</tissue>
    </source>
</reference>
<reference key="5">
    <citation type="journal article" date="2003" name="Biochimie">
        <title>Specificity of interactions of galectin-3 with Chrp, a cysteine- and histidine-rich cytoplasmic protein.</title>
        <authorList>
            <person name="Bawumia S."/>
            <person name="Barboni E.A."/>
            <person name="Menon R.P."/>
            <person name="Hughes R.C."/>
        </authorList>
    </citation>
    <scope>INTERACTION WITH LGALS3</scope>
</reference>
<reference key="6">
    <citation type="journal article" date="2010" name="Cell">
        <title>A tissue-specific atlas of mouse protein phosphorylation and expression.</title>
        <authorList>
            <person name="Huttlin E.L."/>
            <person name="Jedrychowski M.P."/>
            <person name="Elias J.E."/>
            <person name="Goswami T."/>
            <person name="Rad R."/>
            <person name="Beausoleil S.A."/>
            <person name="Villen J."/>
            <person name="Haas W."/>
            <person name="Sowa M.E."/>
            <person name="Gygi S.P."/>
        </authorList>
    </citation>
    <scope>IDENTIFICATION BY MASS SPECTROMETRY [LARGE SCALE ANALYSIS]</scope>
    <source>
        <tissue>Spleen</tissue>
        <tissue>Testis</tissue>
    </source>
</reference>
<accession>P0DW87</accession>
<accession>H3BIV6</accession>
<accession>Q6P6J7</accession>
<accession>Q6ZQA2</accession>
<accession>Q9D134</accession>
<accession>Q9QXA1</accession>
<comment type="subunit">
    <text evidence="4 5">Interacts with LGALS3.</text>
</comment>
<comment type="subcellular location">
    <subcellularLocation>
        <location evidence="4">Cytoplasm</location>
    </subcellularLocation>
    <subcellularLocation>
        <location evidence="4">Cytoplasm</location>
        <location evidence="4">Perinuclear region</location>
    </subcellularLocation>
    <text evidence="4">Shows a prominent perinuclear and cytoplasmic localization.</text>
</comment>
<comment type="alternative products">
    <event type="alternative splicing"/>
    <isoform>
        <id>P0DW87-1</id>
        <id>Q9QXA1-5</id>
        <name>5</name>
        <sequence type="displayed"/>
    </isoform>
    <isoform>
        <id>P0DW87-2</id>
        <id>Q9QXA1-1</id>
        <name>1</name>
        <sequence type="described" ref="VSP_061642"/>
    </isoform>
    <isoform>
        <id>P0DW87-3</id>
        <id>Q9QXA1-6</id>
        <name>6</name>
        <sequence type="described" ref="VSP_061641 VSP_061643"/>
    </isoform>
    <isoform>
        <id>P0DW87-4</id>
        <id>Q9QXA1-7</id>
        <name>7</name>
        <sequence type="described" ref="VSP_061643"/>
    </isoform>
</comment>
<comment type="tissue specificity">
    <text evidence="4">Expressed in heart, brain, liver, testis and kidney.</text>
</comment>
<comment type="similarity">
    <text evidence="7">Belongs to the ZFTRAF1 family.</text>
</comment>
<comment type="sequence caution" evidence="7">
    <conflict type="frameshift">
        <sequence resource="EMBL-CDS" id="AAH62184"/>
    </conflict>
</comment>
<comment type="sequence caution" evidence="7">
    <conflict type="frameshift">
        <sequence resource="EMBL-CDS" id="AAH82772"/>
    </conflict>
</comment>
<comment type="sequence caution" evidence="7">
    <conflict type="erroneous initiation">
        <sequence resource="EMBL-CDS" id="BAC97966"/>
    </conflict>
    <text>Extended N-terminus.</text>
</comment>
<comment type="sequence caution" evidence="7">
    <conflict type="frameshift">
        <sequence resource="EMBL-CDS" id="BAC97966"/>
    </conflict>
</comment>
<sequence>MSGAEEAGGGGPAAGPAGAVPAGVGVGAGPGAAAGPAAAALGEAAGPGIPDEAALAGARQLQEAAGDPDAPPKKRLRAAEAAEAAAAAVAAGSGKLEERLYSVLCCTVCLDLPKASVYQCTNGHLMCAGCFIHLLADARLKEEQATCPNCRCEISKSLCCRNLAVEKAVSELPSECGFCLRQFPRSLLERHQKEECQDRVTQCKYKRIGCPWHGPFHELTVHEAACAHPTKTGNELMEILDEMDQSHRKEMQLYNSIFSLLSFEKIGYTEVQFRPYRTDDFITRLYYETPRFTVLNQTWVLKARVNDSERNPNLSCKRTLSFQLLLKSKVTAPLECSFLLLKGPYDDVRISPVIYHFVFTNESNETDYVPLPIIDSVECNKLLAAKNINLRLFLFQIQK</sequence>
<name>ZTRF1_MOUSE</name>